<protein>
    <recommendedName>
        <fullName evidence="1">CTP synthase</fullName>
        <ecNumber evidence="1">6.3.4.2</ecNumber>
    </recommendedName>
    <alternativeName>
        <fullName evidence="1">Cytidine 5'-triphosphate synthase</fullName>
    </alternativeName>
    <alternativeName>
        <fullName evidence="1">Cytidine triphosphate synthetase</fullName>
        <shortName evidence="1">CTP synthetase</shortName>
        <shortName evidence="1">CTPS</shortName>
    </alternativeName>
    <alternativeName>
        <fullName evidence="1">UTP--ammonia ligase</fullName>
    </alternativeName>
</protein>
<evidence type="ECO:0000255" key="1">
    <source>
        <dbReference type="HAMAP-Rule" id="MF_01227"/>
    </source>
</evidence>
<sequence>MADTKYIFVTGGVSSSLGKGIIAASLAKLLQARGFKATIQKLDPYINVDPGTLNPYEHGECYVTEDGAETDLDLGHYERFLNVNTSQANNVTTGRIYQSVIEKERRGEFLGKTVQVVPHITNEIKERIQILGKNGDYDIVITEIGGTVGDIESLPYIEAVRQLKWELGDDNALVIHLTLVPYLSAAGELKTKPTQHSVKTLMESGIKADILVCRTEHELSDDIRRKLAIFCNVRQEAVIQSIDARTIYDVPNMMLKEGLDKVTLKKLALPDDSTPNLDRWNQFLQRHKNPKAEVHIGLIGKYVELQDSYKSILESFIHAGAENEVSVNVEYIHSEFINDSTIHNKISHLDGVLVAPGFGERGIEGKIDAVRYARENDLPFLGICLGMQMAVIEFSRNVLQLKGANSTEMDADTKHPVIDLMEAQKEVTHKGGTMRLGAWDCELSKDSIIHAVYGVDKIKERHRHRYEYNNKYKEQLENAGMLSTGINPETGLVEIIELKDHPWFVGVQYHPEYKSTVASPHPLFVSFVKAAHEHSVKQKNAKMAQK</sequence>
<accession>A0M3I8</accession>
<dbReference type="EC" id="6.3.4.2" evidence="1"/>
<dbReference type="EMBL" id="CU207366">
    <property type="protein sequence ID" value="CAL67183.1"/>
    <property type="molecule type" value="Genomic_DNA"/>
</dbReference>
<dbReference type="RefSeq" id="WP_011710086.1">
    <property type="nucleotide sequence ID" value="NC_008571.1"/>
</dbReference>
<dbReference type="SMR" id="A0M3I8"/>
<dbReference type="STRING" id="411154.GFO_2218"/>
<dbReference type="KEGG" id="gfo:GFO_2218"/>
<dbReference type="eggNOG" id="COG0504">
    <property type="taxonomic scope" value="Bacteria"/>
</dbReference>
<dbReference type="HOGENOM" id="CLU_011675_5_0_10"/>
<dbReference type="OrthoDB" id="9801107at2"/>
<dbReference type="UniPathway" id="UPA00159">
    <property type="reaction ID" value="UER00277"/>
</dbReference>
<dbReference type="Proteomes" id="UP000000755">
    <property type="component" value="Chromosome"/>
</dbReference>
<dbReference type="GO" id="GO:0005829">
    <property type="term" value="C:cytosol"/>
    <property type="evidence" value="ECO:0007669"/>
    <property type="project" value="TreeGrafter"/>
</dbReference>
<dbReference type="GO" id="GO:0005524">
    <property type="term" value="F:ATP binding"/>
    <property type="evidence" value="ECO:0007669"/>
    <property type="project" value="UniProtKB-KW"/>
</dbReference>
<dbReference type="GO" id="GO:0003883">
    <property type="term" value="F:CTP synthase activity"/>
    <property type="evidence" value="ECO:0007669"/>
    <property type="project" value="UniProtKB-UniRule"/>
</dbReference>
<dbReference type="GO" id="GO:0004359">
    <property type="term" value="F:glutaminase activity"/>
    <property type="evidence" value="ECO:0007669"/>
    <property type="project" value="RHEA"/>
</dbReference>
<dbReference type="GO" id="GO:0042802">
    <property type="term" value="F:identical protein binding"/>
    <property type="evidence" value="ECO:0007669"/>
    <property type="project" value="TreeGrafter"/>
</dbReference>
<dbReference type="GO" id="GO:0046872">
    <property type="term" value="F:metal ion binding"/>
    <property type="evidence" value="ECO:0007669"/>
    <property type="project" value="UniProtKB-KW"/>
</dbReference>
<dbReference type="GO" id="GO:0044210">
    <property type="term" value="P:'de novo' CTP biosynthetic process"/>
    <property type="evidence" value="ECO:0007669"/>
    <property type="project" value="UniProtKB-UniRule"/>
</dbReference>
<dbReference type="GO" id="GO:0019856">
    <property type="term" value="P:pyrimidine nucleobase biosynthetic process"/>
    <property type="evidence" value="ECO:0007669"/>
    <property type="project" value="TreeGrafter"/>
</dbReference>
<dbReference type="CDD" id="cd03113">
    <property type="entry name" value="CTPS_N"/>
    <property type="match status" value="1"/>
</dbReference>
<dbReference type="CDD" id="cd01746">
    <property type="entry name" value="GATase1_CTP_Synthase"/>
    <property type="match status" value="1"/>
</dbReference>
<dbReference type="FunFam" id="3.40.50.300:FF:000009">
    <property type="entry name" value="CTP synthase"/>
    <property type="match status" value="1"/>
</dbReference>
<dbReference type="FunFam" id="3.40.50.880:FF:000002">
    <property type="entry name" value="CTP synthase"/>
    <property type="match status" value="1"/>
</dbReference>
<dbReference type="Gene3D" id="3.40.50.880">
    <property type="match status" value="1"/>
</dbReference>
<dbReference type="Gene3D" id="3.40.50.300">
    <property type="entry name" value="P-loop containing nucleotide triphosphate hydrolases"/>
    <property type="match status" value="1"/>
</dbReference>
<dbReference type="HAMAP" id="MF_01227">
    <property type="entry name" value="PyrG"/>
    <property type="match status" value="1"/>
</dbReference>
<dbReference type="InterPro" id="IPR029062">
    <property type="entry name" value="Class_I_gatase-like"/>
</dbReference>
<dbReference type="InterPro" id="IPR004468">
    <property type="entry name" value="CTP_synthase"/>
</dbReference>
<dbReference type="InterPro" id="IPR017456">
    <property type="entry name" value="CTP_synthase_N"/>
</dbReference>
<dbReference type="InterPro" id="IPR017926">
    <property type="entry name" value="GATASE"/>
</dbReference>
<dbReference type="InterPro" id="IPR033828">
    <property type="entry name" value="GATase1_CTP_Synthase"/>
</dbReference>
<dbReference type="InterPro" id="IPR027417">
    <property type="entry name" value="P-loop_NTPase"/>
</dbReference>
<dbReference type="NCBIfam" id="NF003792">
    <property type="entry name" value="PRK05380.1"/>
    <property type="match status" value="1"/>
</dbReference>
<dbReference type="NCBIfam" id="TIGR00337">
    <property type="entry name" value="PyrG"/>
    <property type="match status" value="1"/>
</dbReference>
<dbReference type="PANTHER" id="PTHR11550">
    <property type="entry name" value="CTP SYNTHASE"/>
    <property type="match status" value="1"/>
</dbReference>
<dbReference type="PANTHER" id="PTHR11550:SF0">
    <property type="entry name" value="CTP SYNTHASE-RELATED"/>
    <property type="match status" value="1"/>
</dbReference>
<dbReference type="Pfam" id="PF06418">
    <property type="entry name" value="CTP_synth_N"/>
    <property type="match status" value="1"/>
</dbReference>
<dbReference type="Pfam" id="PF00117">
    <property type="entry name" value="GATase"/>
    <property type="match status" value="1"/>
</dbReference>
<dbReference type="SUPFAM" id="SSF52317">
    <property type="entry name" value="Class I glutamine amidotransferase-like"/>
    <property type="match status" value="1"/>
</dbReference>
<dbReference type="SUPFAM" id="SSF52540">
    <property type="entry name" value="P-loop containing nucleoside triphosphate hydrolases"/>
    <property type="match status" value="1"/>
</dbReference>
<dbReference type="PROSITE" id="PS51273">
    <property type="entry name" value="GATASE_TYPE_1"/>
    <property type="match status" value="1"/>
</dbReference>
<organism>
    <name type="scientific">Christiangramia forsetii (strain DSM 17595 / CGMCC 1.15422 / KT0803)</name>
    <name type="common">Gramella forsetii</name>
    <dbReference type="NCBI Taxonomy" id="411154"/>
    <lineage>
        <taxon>Bacteria</taxon>
        <taxon>Pseudomonadati</taxon>
        <taxon>Bacteroidota</taxon>
        <taxon>Flavobacteriia</taxon>
        <taxon>Flavobacteriales</taxon>
        <taxon>Flavobacteriaceae</taxon>
        <taxon>Christiangramia</taxon>
    </lineage>
</organism>
<gene>
    <name evidence="1" type="primary">pyrG</name>
    <name type="ordered locus">GFO_2218</name>
</gene>
<keyword id="KW-0067">ATP-binding</keyword>
<keyword id="KW-0315">Glutamine amidotransferase</keyword>
<keyword id="KW-0436">Ligase</keyword>
<keyword id="KW-0460">Magnesium</keyword>
<keyword id="KW-0479">Metal-binding</keyword>
<keyword id="KW-0547">Nucleotide-binding</keyword>
<keyword id="KW-0665">Pyrimidine biosynthesis</keyword>
<feature type="chain" id="PRO_1000139466" description="CTP synthase">
    <location>
        <begin position="1"/>
        <end position="546"/>
    </location>
</feature>
<feature type="domain" description="Glutamine amidotransferase type-1" evidence="1">
    <location>
        <begin position="295"/>
        <end position="537"/>
    </location>
</feature>
<feature type="region of interest" description="Amidoligase domain" evidence="1">
    <location>
        <begin position="1"/>
        <end position="269"/>
    </location>
</feature>
<feature type="active site" description="Nucleophile; for glutamine hydrolysis" evidence="1">
    <location>
        <position position="384"/>
    </location>
</feature>
<feature type="active site" evidence="1">
    <location>
        <position position="510"/>
    </location>
</feature>
<feature type="active site" evidence="1">
    <location>
        <position position="512"/>
    </location>
</feature>
<feature type="binding site" evidence="1">
    <location>
        <position position="15"/>
    </location>
    <ligand>
        <name>CTP</name>
        <dbReference type="ChEBI" id="CHEBI:37563"/>
        <note>allosteric inhibitor</note>
    </ligand>
</feature>
<feature type="binding site" evidence="1">
    <location>
        <position position="15"/>
    </location>
    <ligand>
        <name>UTP</name>
        <dbReference type="ChEBI" id="CHEBI:46398"/>
    </ligand>
</feature>
<feature type="binding site" evidence="1">
    <location>
        <begin position="16"/>
        <end position="21"/>
    </location>
    <ligand>
        <name>ATP</name>
        <dbReference type="ChEBI" id="CHEBI:30616"/>
    </ligand>
</feature>
<feature type="binding site" evidence="1">
    <location>
        <position position="56"/>
    </location>
    <ligand>
        <name>L-glutamine</name>
        <dbReference type="ChEBI" id="CHEBI:58359"/>
    </ligand>
</feature>
<feature type="binding site" evidence="1">
    <location>
        <position position="73"/>
    </location>
    <ligand>
        <name>ATP</name>
        <dbReference type="ChEBI" id="CHEBI:30616"/>
    </ligand>
</feature>
<feature type="binding site" evidence="1">
    <location>
        <position position="73"/>
    </location>
    <ligand>
        <name>Mg(2+)</name>
        <dbReference type="ChEBI" id="CHEBI:18420"/>
    </ligand>
</feature>
<feature type="binding site" evidence="1">
    <location>
        <position position="143"/>
    </location>
    <ligand>
        <name>Mg(2+)</name>
        <dbReference type="ChEBI" id="CHEBI:18420"/>
    </ligand>
</feature>
<feature type="binding site" evidence="1">
    <location>
        <begin position="150"/>
        <end position="152"/>
    </location>
    <ligand>
        <name>CTP</name>
        <dbReference type="ChEBI" id="CHEBI:37563"/>
        <note>allosteric inhibitor</note>
    </ligand>
</feature>
<feature type="binding site" evidence="1">
    <location>
        <begin position="190"/>
        <end position="195"/>
    </location>
    <ligand>
        <name>CTP</name>
        <dbReference type="ChEBI" id="CHEBI:37563"/>
        <note>allosteric inhibitor</note>
    </ligand>
</feature>
<feature type="binding site" evidence="1">
    <location>
        <begin position="190"/>
        <end position="195"/>
    </location>
    <ligand>
        <name>UTP</name>
        <dbReference type="ChEBI" id="CHEBI:46398"/>
    </ligand>
</feature>
<feature type="binding site" evidence="1">
    <location>
        <position position="226"/>
    </location>
    <ligand>
        <name>CTP</name>
        <dbReference type="ChEBI" id="CHEBI:37563"/>
        <note>allosteric inhibitor</note>
    </ligand>
</feature>
<feature type="binding site" evidence="1">
    <location>
        <position position="226"/>
    </location>
    <ligand>
        <name>UTP</name>
        <dbReference type="ChEBI" id="CHEBI:46398"/>
    </ligand>
</feature>
<feature type="binding site" evidence="1">
    <location>
        <position position="357"/>
    </location>
    <ligand>
        <name>L-glutamine</name>
        <dbReference type="ChEBI" id="CHEBI:58359"/>
    </ligand>
</feature>
<feature type="binding site" evidence="1">
    <location>
        <begin position="385"/>
        <end position="388"/>
    </location>
    <ligand>
        <name>L-glutamine</name>
        <dbReference type="ChEBI" id="CHEBI:58359"/>
    </ligand>
</feature>
<feature type="binding site" evidence="1">
    <location>
        <position position="408"/>
    </location>
    <ligand>
        <name>L-glutamine</name>
        <dbReference type="ChEBI" id="CHEBI:58359"/>
    </ligand>
</feature>
<feature type="binding site" evidence="1">
    <location>
        <position position="465"/>
    </location>
    <ligand>
        <name>L-glutamine</name>
        <dbReference type="ChEBI" id="CHEBI:58359"/>
    </ligand>
</feature>
<name>PYRG_CHRFK</name>
<comment type="function">
    <text evidence="1">Catalyzes the ATP-dependent amination of UTP to CTP with either L-glutamine or ammonia as the source of nitrogen. Regulates intracellular CTP levels through interactions with the four ribonucleotide triphosphates.</text>
</comment>
<comment type="catalytic activity">
    <reaction evidence="1">
        <text>UTP + L-glutamine + ATP + H2O = CTP + L-glutamate + ADP + phosphate + 2 H(+)</text>
        <dbReference type="Rhea" id="RHEA:26426"/>
        <dbReference type="ChEBI" id="CHEBI:15377"/>
        <dbReference type="ChEBI" id="CHEBI:15378"/>
        <dbReference type="ChEBI" id="CHEBI:29985"/>
        <dbReference type="ChEBI" id="CHEBI:30616"/>
        <dbReference type="ChEBI" id="CHEBI:37563"/>
        <dbReference type="ChEBI" id="CHEBI:43474"/>
        <dbReference type="ChEBI" id="CHEBI:46398"/>
        <dbReference type="ChEBI" id="CHEBI:58359"/>
        <dbReference type="ChEBI" id="CHEBI:456216"/>
        <dbReference type="EC" id="6.3.4.2"/>
    </reaction>
</comment>
<comment type="catalytic activity">
    <reaction evidence="1">
        <text>L-glutamine + H2O = L-glutamate + NH4(+)</text>
        <dbReference type="Rhea" id="RHEA:15889"/>
        <dbReference type="ChEBI" id="CHEBI:15377"/>
        <dbReference type="ChEBI" id="CHEBI:28938"/>
        <dbReference type="ChEBI" id="CHEBI:29985"/>
        <dbReference type="ChEBI" id="CHEBI:58359"/>
    </reaction>
</comment>
<comment type="catalytic activity">
    <reaction evidence="1">
        <text>UTP + NH4(+) + ATP = CTP + ADP + phosphate + 2 H(+)</text>
        <dbReference type="Rhea" id="RHEA:16597"/>
        <dbReference type="ChEBI" id="CHEBI:15378"/>
        <dbReference type="ChEBI" id="CHEBI:28938"/>
        <dbReference type="ChEBI" id="CHEBI:30616"/>
        <dbReference type="ChEBI" id="CHEBI:37563"/>
        <dbReference type="ChEBI" id="CHEBI:43474"/>
        <dbReference type="ChEBI" id="CHEBI:46398"/>
        <dbReference type="ChEBI" id="CHEBI:456216"/>
    </reaction>
</comment>
<comment type="activity regulation">
    <text evidence="1">Allosterically activated by GTP, when glutamine is the substrate; GTP has no effect on the reaction when ammonia is the substrate. The allosteric effector GTP functions by stabilizing the protein conformation that binds the tetrahedral intermediate(s) formed during glutamine hydrolysis. Inhibited by the product CTP, via allosteric rather than competitive inhibition.</text>
</comment>
<comment type="pathway">
    <text evidence="1">Pyrimidine metabolism; CTP biosynthesis via de novo pathway; CTP from UDP: step 2/2.</text>
</comment>
<comment type="subunit">
    <text evidence="1">Homotetramer.</text>
</comment>
<comment type="miscellaneous">
    <text evidence="1">CTPSs have evolved a hybrid strategy for distinguishing between UTP and CTP. The overlapping regions of the product feedback inhibitory and substrate sites recognize a common feature in both compounds, the triphosphate moiety. To differentiate isosteric substrate and product pyrimidine rings, an additional pocket far from the expected kinase/ligase catalytic site, specifically recognizes the cytosine and ribose portions of the product inhibitor.</text>
</comment>
<comment type="similarity">
    <text evidence="1">Belongs to the CTP synthase family.</text>
</comment>
<reference key="1">
    <citation type="journal article" date="2006" name="Environ. Microbiol.">
        <title>Whole genome analysis of the marine Bacteroidetes'Gramella forsetii' reveals adaptations to degradation of polymeric organic matter.</title>
        <authorList>
            <person name="Bauer M."/>
            <person name="Kube M."/>
            <person name="Teeling H."/>
            <person name="Richter M."/>
            <person name="Lombardot T."/>
            <person name="Allers E."/>
            <person name="Wuerdemann C.A."/>
            <person name="Quast C."/>
            <person name="Kuhl H."/>
            <person name="Knaust F."/>
            <person name="Woebken D."/>
            <person name="Bischof K."/>
            <person name="Mussmann M."/>
            <person name="Choudhuri J.V."/>
            <person name="Meyer F."/>
            <person name="Reinhardt R."/>
            <person name="Amann R.I."/>
            <person name="Gloeckner F.O."/>
        </authorList>
    </citation>
    <scope>NUCLEOTIDE SEQUENCE [LARGE SCALE GENOMIC DNA]</scope>
    <source>
        <strain>DSM 17595 / CGMCC 1.15422 / KT0803</strain>
    </source>
</reference>
<proteinExistence type="inferred from homology"/>